<protein>
    <recommendedName>
        <fullName evidence="5">Antifungal protein ginkbilobin-like protein 2</fullName>
    </recommendedName>
    <alternativeName>
        <fullName evidence="5">Embryo-abundant protein 35</fullName>
    </alternativeName>
</protein>
<accession>Q40858</accession>
<gene>
    <name evidence="6" type="primary">EMB35</name>
</gene>
<dbReference type="EMBL" id="L47605">
    <property type="protein sequence ID" value="AAB01601.1"/>
    <property type="molecule type" value="mRNA"/>
</dbReference>
<dbReference type="PIR" id="T09282">
    <property type="entry name" value="T09282"/>
</dbReference>
<dbReference type="SMR" id="Q40858"/>
<dbReference type="GO" id="GO:0009506">
    <property type="term" value="C:plasmodesma"/>
    <property type="evidence" value="ECO:0007669"/>
    <property type="project" value="TreeGrafter"/>
</dbReference>
<dbReference type="GO" id="GO:0005537">
    <property type="term" value="F:D-mannose binding"/>
    <property type="evidence" value="ECO:0007669"/>
    <property type="project" value="UniProtKB-KW"/>
</dbReference>
<dbReference type="GO" id="GO:0042742">
    <property type="term" value="P:defense response to bacterium"/>
    <property type="evidence" value="ECO:0007669"/>
    <property type="project" value="UniProtKB-KW"/>
</dbReference>
<dbReference type="GO" id="GO:0050832">
    <property type="term" value="P:defense response to fungus"/>
    <property type="evidence" value="ECO:0000250"/>
    <property type="project" value="UniProtKB"/>
</dbReference>
<dbReference type="GO" id="GO:0031640">
    <property type="term" value="P:killing of cells of another organism"/>
    <property type="evidence" value="ECO:0007669"/>
    <property type="project" value="UniProtKB-KW"/>
</dbReference>
<dbReference type="GO" id="GO:0009737">
    <property type="term" value="P:response to abscisic acid"/>
    <property type="evidence" value="ECO:0000270"/>
    <property type="project" value="UniProtKB"/>
</dbReference>
<dbReference type="CDD" id="cd23509">
    <property type="entry name" value="Gnk2-like"/>
    <property type="match status" value="1"/>
</dbReference>
<dbReference type="Gene3D" id="3.30.430.20">
    <property type="entry name" value="Gnk2 domain, C-X8-C-X2-C motif"/>
    <property type="match status" value="1"/>
</dbReference>
<dbReference type="InterPro" id="IPR051378">
    <property type="entry name" value="Cell2Cell_Antifungal"/>
</dbReference>
<dbReference type="InterPro" id="IPR002902">
    <property type="entry name" value="GNK2"/>
</dbReference>
<dbReference type="InterPro" id="IPR038408">
    <property type="entry name" value="GNK2_sf"/>
</dbReference>
<dbReference type="PANTHER" id="PTHR32080">
    <property type="entry name" value="ANTIFUNGAL PROTEIN GINKBILOBIN-2-LIKE"/>
    <property type="match status" value="1"/>
</dbReference>
<dbReference type="PANTHER" id="PTHR32080:SF54">
    <property type="entry name" value="GNK2-HOMOLOGOUS DOMAIN-CONTAINING PROTEIN"/>
    <property type="match status" value="1"/>
</dbReference>
<dbReference type="Pfam" id="PF01657">
    <property type="entry name" value="Stress-antifung"/>
    <property type="match status" value="1"/>
</dbReference>
<dbReference type="PROSITE" id="PS51473">
    <property type="entry name" value="GNK2"/>
    <property type="match status" value="1"/>
</dbReference>
<organism>
    <name type="scientific">Picea glauca</name>
    <name type="common">White spruce</name>
    <name type="synonym">Pinus glauca</name>
    <dbReference type="NCBI Taxonomy" id="3330"/>
    <lineage>
        <taxon>Eukaryota</taxon>
        <taxon>Viridiplantae</taxon>
        <taxon>Streptophyta</taxon>
        <taxon>Embryophyta</taxon>
        <taxon>Tracheophyta</taxon>
        <taxon>Spermatophyta</taxon>
        <taxon>Pinopsida</taxon>
        <taxon>Pinidae</taxon>
        <taxon>Conifers I</taxon>
        <taxon>Pinales</taxon>
        <taxon>Pinaceae</taxon>
        <taxon>Picea</taxon>
    </lineage>
</organism>
<feature type="signal peptide" evidence="2">
    <location>
        <begin position="1"/>
        <end position="24"/>
    </location>
</feature>
<feature type="chain" id="PRO_5004231631" description="Antifungal protein ginkbilobin-like protein 2">
    <location>
        <begin position="25"/>
        <end position="133"/>
    </location>
</feature>
<feature type="domain" description="Gnk2-homologous" evidence="3">
    <location>
        <begin position="28"/>
        <end position="133"/>
    </location>
</feature>
<feature type="binding site" evidence="1">
    <location>
        <position position="36"/>
    </location>
    <ligand>
        <name>alpha-D-mannopyranose</name>
        <dbReference type="ChEBI" id="CHEBI:28729"/>
    </ligand>
</feature>
<feature type="binding site" evidence="1">
    <location>
        <position position="118"/>
    </location>
    <ligand>
        <name>alpha-D-mannopyranose</name>
        <dbReference type="ChEBI" id="CHEBI:28729"/>
    </ligand>
</feature>
<feature type="binding site" evidence="1">
    <location>
        <position position="129"/>
    </location>
    <ligand>
        <name>alpha-D-mannopyranose</name>
        <dbReference type="ChEBI" id="CHEBI:28729"/>
    </ligand>
</feature>
<feature type="disulfide bond" evidence="3">
    <location>
        <begin position="87"/>
        <end position="96"/>
    </location>
</feature>
<feature type="disulfide bond" evidence="3">
    <location>
        <begin position="99"/>
        <end position="124"/>
    </location>
</feature>
<keyword id="KW-0044">Antibiotic</keyword>
<keyword id="KW-0929">Antimicrobial</keyword>
<keyword id="KW-1015">Disulfide bond</keyword>
<keyword id="KW-0295">Fungicide</keyword>
<keyword id="KW-0430">Lectin</keyword>
<keyword id="KW-0465">Mannose-binding</keyword>
<keyword id="KW-0611">Plant defense</keyword>
<keyword id="KW-0732">Signal</keyword>
<sequence>MSMGSFGFALAVMVLAVLVASAAGAPNTNLVSSACNGNKIPSGNPFFNNLGALLVDLEKNTAFSGFDYKASRAGSGGAPTAYGRGVCKQSISQSDCTACLTNLGGRIWGISKNAIGARVQLTDCFIRYEQYSI</sequence>
<evidence type="ECO:0000250" key="1">
    <source>
        <dbReference type="UniProtKB" id="A4ZDL6"/>
    </source>
</evidence>
<evidence type="ECO:0000255" key="2"/>
<evidence type="ECO:0000255" key="3">
    <source>
        <dbReference type="PROSITE-ProRule" id="PRU00806"/>
    </source>
</evidence>
<evidence type="ECO:0000269" key="4">
    <source>
    </source>
</evidence>
<evidence type="ECO:0000305" key="5"/>
<evidence type="ECO:0000312" key="6">
    <source>
        <dbReference type="EMBL" id="AAB01601.1"/>
    </source>
</evidence>
<reference key="1">
    <citation type="journal article" date="1996" name="Planta">
        <title>Expression of abundant mRNAs during somatic embryogenesis of white spruce [Picea glauca (Moench) Voss].</title>
        <authorList>
            <person name="Dong J.Z."/>
            <person name="Dunstan D.I."/>
        </authorList>
    </citation>
    <scope>NUCLEOTIDE SEQUENCE [MRNA]</scope>
    <scope>DEVELOPMENTAL STAGE</scope>
    <scope>INDUCTION BY ABA</scope>
    <source>
        <tissue>Embryo</tissue>
    </source>
</reference>
<reference key="2">
    <citation type="journal article" date="2016" name="Protoplasma">
        <title>An antifungal protein from Ginkgo biloba binds actin and can trigger cell death.</title>
        <authorList>
            <person name="Gao N."/>
            <person name="Wadhwani P."/>
            <person name="Muehlhaeuser P."/>
            <person name="Liu Q."/>
            <person name="Riemann M."/>
            <person name="Ulrich A.S."/>
            <person name="Nick P."/>
        </authorList>
    </citation>
    <scope>IDENTIFICATION</scope>
</reference>
<proteinExistence type="evidence at transcript level"/>
<comment type="function">
    <text evidence="1">Exerts antifungal activity through its carbohydrate-binding specificity.</text>
</comment>
<comment type="developmental stage">
    <text evidence="4">Expressed during embryo development.</text>
</comment>
<comment type="induction">
    <text evidence="4">Induced by abscisic acid (ABA).</text>
</comment>
<name>GNKL2_PICGL</name>